<proteinExistence type="uncertain"/>
<gene>
    <name evidence="2" type="primary">PUX15</name>
    <name evidence="4" type="ordered locus">At1g59550</name>
    <name evidence="5" type="ORF">T30E16.10</name>
    <name evidence="6" type="ORF">T4M14.13</name>
</gene>
<reference key="1">
    <citation type="journal article" date="2000" name="Nature">
        <title>Sequence and analysis of chromosome 1 of the plant Arabidopsis thaliana.</title>
        <authorList>
            <person name="Theologis A."/>
            <person name="Ecker J.R."/>
            <person name="Palm C.J."/>
            <person name="Federspiel N.A."/>
            <person name="Kaul S."/>
            <person name="White O."/>
            <person name="Alonso J."/>
            <person name="Altafi H."/>
            <person name="Araujo R."/>
            <person name="Bowman C.L."/>
            <person name="Brooks S.Y."/>
            <person name="Buehler E."/>
            <person name="Chan A."/>
            <person name="Chao Q."/>
            <person name="Chen H."/>
            <person name="Cheuk R.F."/>
            <person name="Chin C.W."/>
            <person name="Chung M.K."/>
            <person name="Conn L."/>
            <person name="Conway A.B."/>
            <person name="Conway A.R."/>
            <person name="Creasy T.H."/>
            <person name="Dewar K."/>
            <person name="Dunn P."/>
            <person name="Etgu P."/>
            <person name="Feldblyum T.V."/>
            <person name="Feng J.-D."/>
            <person name="Fong B."/>
            <person name="Fujii C.Y."/>
            <person name="Gill J.E."/>
            <person name="Goldsmith A.D."/>
            <person name="Haas B."/>
            <person name="Hansen N.F."/>
            <person name="Hughes B."/>
            <person name="Huizar L."/>
            <person name="Hunter J.L."/>
            <person name="Jenkins J."/>
            <person name="Johnson-Hopson C."/>
            <person name="Khan S."/>
            <person name="Khaykin E."/>
            <person name="Kim C.J."/>
            <person name="Koo H.L."/>
            <person name="Kremenetskaia I."/>
            <person name="Kurtz D.B."/>
            <person name="Kwan A."/>
            <person name="Lam B."/>
            <person name="Langin-Hooper S."/>
            <person name="Lee A."/>
            <person name="Lee J.M."/>
            <person name="Lenz C.A."/>
            <person name="Li J.H."/>
            <person name="Li Y.-P."/>
            <person name="Lin X."/>
            <person name="Liu S.X."/>
            <person name="Liu Z.A."/>
            <person name="Luros J.S."/>
            <person name="Maiti R."/>
            <person name="Marziali A."/>
            <person name="Militscher J."/>
            <person name="Miranda M."/>
            <person name="Nguyen M."/>
            <person name="Nierman W.C."/>
            <person name="Osborne B.I."/>
            <person name="Pai G."/>
            <person name="Peterson J."/>
            <person name="Pham P.K."/>
            <person name="Rizzo M."/>
            <person name="Rooney T."/>
            <person name="Rowley D."/>
            <person name="Sakano H."/>
            <person name="Salzberg S.L."/>
            <person name="Schwartz J.R."/>
            <person name="Shinn P."/>
            <person name="Southwick A.M."/>
            <person name="Sun H."/>
            <person name="Tallon L.J."/>
            <person name="Tambunga G."/>
            <person name="Toriumi M.J."/>
            <person name="Town C.D."/>
            <person name="Utterback T."/>
            <person name="Van Aken S."/>
            <person name="Vaysberg M."/>
            <person name="Vysotskaia V.S."/>
            <person name="Walker M."/>
            <person name="Wu D."/>
            <person name="Yu G."/>
            <person name="Fraser C.M."/>
            <person name="Venter J.C."/>
            <person name="Davis R.W."/>
        </authorList>
    </citation>
    <scope>NUCLEOTIDE SEQUENCE [LARGE SCALE GENOMIC DNA]</scope>
    <source>
        <strain>cv. Columbia</strain>
    </source>
</reference>
<reference key="2">
    <citation type="journal article" date="2017" name="Plant J.">
        <title>Araport11: a complete reannotation of the Arabidopsis thaliana reference genome.</title>
        <authorList>
            <person name="Cheng C.Y."/>
            <person name="Krishnakumar V."/>
            <person name="Chan A.P."/>
            <person name="Thibaud-Nissen F."/>
            <person name="Schobel S."/>
            <person name="Town C.D."/>
        </authorList>
    </citation>
    <scope>GENOME REANNOTATION</scope>
    <source>
        <strain>cv. Columbia</strain>
    </source>
</reference>
<reference key="3">
    <citation type="book" date="2005" name="Proceedings of the 16th international conference on Arabidopsis research">
        <title>The plant UBX-domain containing (PUX) protein family regulates the function of Arabidopsis CDC48, a conserved essential AAA-ATPase.</title>
        <authorList>
            <person name="Posthuma R."/>
            <person name="Rancour D."/>
            <person name="Park S."/>
            <person name="Bates B."/>
            <person name="Bednarek S."/>
        </authorList>
    </citation>
    <scope>GENE FAMILY</scope>
</reference>
<comment type="caution">
    <text evidence="3">Could be the product of a pseudogene.</text>
</comment>
<comment type="sequence caution" evidence="3">
    <conflict type="erroneous gene model prediction">
        <sequence resource="EMBL-CDS" id="AAF79774"/>
    </conflict>
</comment>
<comment type="sequence caution" evidence="3">
    <conflict type="erroneous gene model prediction">
        <sequence resource="EMBL-CDS" id="AAK62798"/>
    </conflict>
</comment>
<comment type="sequence caution" evidence="3">
    <conflict type="erroneous gene model prediction">
        <sequence resource="EMBL-CDS" id="AEE33588"/>
    </conflict>
</comment>
<feature type="chain" id="PRO_0000432613" description="Putative plant UBX domain-containing protein 15">
    <location>
        <begin position="1"/>
        <end position="359"/>
    </location>
</feature>
<feature type="domain" description="UBX" evidence="1">
    <location>
        <begin position="277"/>
        <end position="357"/>
    </location>
</feature>
<dbReference type="EMBL" id="AC009317">
    <property type="protein sequence ID" value="AAF79774.1"/>
    <property type="status" value="ALT_SEQ"/>
    <property type="molecule type" value="Genomic_DNA"/>
</dbReference>
<dbReference type="EMBL" id="AC027036">
    <property type="protein sequence ID" value="AAK62798.1"/>
    <property type="status" value="ALT_SEQ"/>
    <property type="molecule type" value="Genomic_DNA"/>
</dbReference>
<dbReference type="EMBL" id="CP002684">
    <property type="protein sequence ID" value="AEE33588.1"/>
    <property type="status" value="ALT_SEQ"/>
    <property type="molecule type" value="Genomic_DNA"/>
</dbReference>
<dbReference type="RefSeq" id="NP_176165.1">
    <property type="nucleotide sequence ID" value="NM_104649.1"/>
</dbReference>
<dbReference type="SMR" id="Q94HV8"/>
<dbReference type="FunCoup" id="Q94HV8">
    <property type="interactions" value="2901"/>
</dbReference>
<dbReference type="STRING" id="3702.Q94HV8"/>
<dbReference type="TCDB" id="3.A.16.1.5">
    <property type="family name" value="the endoplasmic reticular retrotranslocon (er-rt) family"/>
</dbReference>
<dbReference type="GeneID" id="842246"/>
<dbReference type="KEGG" id="ath:AT1G59550"/>
<dbReference type="Araport" id="AT1G59550"/>
<dbReference type="TAIR" id="AT1G59550"/>
<dbReference type="HOGENOM" id="CLU_021255_0_0_1"/>
<dbReference type="InParanoid" id="Q94HV8"/>
<dbReference type="Proteomes" id="UP000006548">
    <property type="component" value="Chromosome 1"/>
</dbReference>
<dbReference type="GO" id="GO:0005634">
    <property type="term" value="C:nucleus"/>
    <property type="evidence" value="ECO:0000318"/>
    <property type="project" value="GO_Central"/>
</dbReference>
<dbReference type="GO" id="GO:0043130">
    <property type="term" value="F:ubiquitin binding"/>
    <property type="evidence" value="ECO:0000318"/>
    <property type="project" value="GO_Central"/>
</dbReference>
<dbReference type="GO" id="GO:0043161">
    <property type="term" value="P:proteasome-mediated ubiquitin-dependent protein catabolic process"/>
    <property type="evidence" value="ECO:0000318"/>
    <property type="project" value="GO_Central"/>
</dbReference>
<dbReference type="CDD" id="cd02958">
    <property type="entry name" value="UAS"/>
    <property type="match status" value="1"/>
</dbReference>
<dbReference type="CDD" id="cd01767">
    <property type="entry name" value="UBX"/>
    <property type="match status" value="1"/>
</dbReference>
<dbReference type="Gene3D" id="3.40.30.10">
    <property type="entry name" value="Glutaredoxin"/>
    <property type="match status" value="1"/>
</dbReference>
<dbReference type="Gene3D" id="3.10.20.90">
    <property type="entry name" value="Phosphatidylinositol 3-kinase Catalytic Subunit, Chain A, domain 1"/>
    <property type="match status" value="1"/>
</dbReference>
<dbReference type="InterPro" id="IPR036249">
    <property type="entry name" value="Thioredoxin-like_sf"/>
</dbReference>
<dbReference type="InterPro" id="IPR006577">
    <property type="entry name" value="UAS"/>
</dbReference>
<dbReference type="InterPro" id="IPR029071">
    <property type="entry name" value="Ubiquitin-like_domsf"/>
</dbReference>
<dbReference type="InterPro" id="IPR001012">
    <property type="entry name" value="UBX_dom"/>
</dbReference>
<dbReference type="InterPro" id="IPR050730">
    <property type="entry name" value="UBX_domain-protein"/>
</dbReference>
<dbReference type="PANTHER" id="PTHR23322">
    <property type="entry name" value="FAS-ASSOCIATED PROTEIN"/>
    <property type="match status" value="1"/>
</dbReference>
<dbReference type="PANTHER" id="PTHR23322:SF78">
    <property type="entry name" value="PLANT UBX DOMAIN-CONTAINING PROTEIN 16-RELATED"/>
    <property type="match status" value="1"/>
</dbReference>
<dbReference type="Pfam" id="PF13899">
    <property type="entry name" value="Thioredoxin_7"/>
    <property type="match status" value="1"/>
</dbReference>
<dbReference type="Pfam" id="PF14555">
    <property type="entry name" value="UBA_4"/>
    <property type="match status" value="1"/>
</dbReference>
<dbReference type="Pfam" id="PF00789">
    <property type="entry name" value="UBX"/>
    <property type="match status" value="1"/>
</dbReference>
<dbReference type="SMART" id="SM00594">
    <property type="entry name" value="UAS"/>
    <property type="match status" value="1"/>
</dbReference>
<dbReference type="SUPFAM" id="SSF52833">
    <property type="entry name" value="Thioredoxin-like"/>
    <property type="match status" value="1"/>
</dbReference>
<dbReference type="SUPFAM" id="SSF54236">
    <property type="entry name" value="Ubiquitin-like"/>
    <property type="match status" value="1"/>
</dbReference>
<dbReference type="PROSITE" id="PS50033">
    <property type="entry name" value="UBX"/>
    <property type="match status" value="1"/>
</dbReference>
<organism>
    <name type="scientific">Arabidopsis thaliana</name>
    <name type="common">Mouse-ear cress</name>
    <dbReference type="NCBI Taxonomy" id="3702"/>
    <lineage>
        <taxon>Eukaryota</taxon>
        <taxon>Viridiplantae</taxon>
        <taxon>Streptophyta</taxon>
        <taxon>Embryophyta</taxon>
        <taxon>Tracheophyta</taxon>
        <taxon>Spermatophyta</taxon>
        <taxon>Magnoliopsida</taxon>
        <taxon>eudicotyledons</taxon>
        <taxon>Gunneridae</taxon>
        <taxon>Pentapetalae</taxon>
        <taxon>rosids</taxon>
        <taxon>malvids</taxon>
        <taxon>Brassicales</taxon>
        <taxon>Brassicaceae</taxon>
        <taxon>Camelineae</taxon>
        <taxon>Arabidopsis</taxon>
    </lineage>
</organism>
<keyword id="KW-1185">Reference proteome</keyword>
<keyword id="KW-0833">Ubl conjugation pathway</keyword>
<sequence length="359" mass="40905">MESNYQRTLVSAFLNISVDQTVETAIKCLKSTNWKLEDAINLLFAIDRMRNNQTLTLKPSDSTRLPSLSPPPPLNLLFNGSFEDAKLASSSKDLWLLVHIQSETEFPCNTFNRDLWSNEDVSQALEFRFMLWQVYDHTSEGRKITSFYMIQHFLIDPITGQNICIWRGEIKAKGFLKDLKKYIDASPHEHIASTARNMRVKAEKICHSDQQDMVGFTDDDFDDFDEGNLSSDSVVVSSCGREFDDVVTLSEDEEETCLSSDLFEFPVLTKEPKGDCDRSVVCSISVRFPNGRRKQRKFLKSEPVQLLWSFCYSHMDESDNKAFKLVQAIPGASKTLDYGAEASFDQYGIANSIISVTWE</sequence>
<evidence type="ECO:0000255" key="1">
    <source>
        <dbReference type="PROSITE-ProRule" id="PRU00215"/>
    </source>
</evidence>
<evidence type="ECO:0000303" key="2">
    <source ref="3"/>
</evidence>
<evidence type="ECO:0000305" key="3"/>
<evidence type="ECO:0000312" key="4">
    <source>
        <dbReference type="Araport" id="AT1G59550"/>
    </source>
</evidence>
<evidence type="ECO:0000312" key="5">
    <source>
        <dbReference type="EMBL" id="AAF79774.1"/>
    </source>
</evidence>
<evidence type="ECO:0000312" key="6">
    <source>
        <dbReference type="EMBL" id="AAK62798.1"/>
    </source>
</evidence>
<name>PUX15_ARATH</name>
<accession>Q94HV8</accession>
<accession>Q9LQ61</accession>
<protein>
    <recommendedName>
        <fullName evidence="2">Putative plant UBX domain-containing protein 15</fullName>
        <shortName evidence="2">PUX15</shortName>
    </recommendedName>
</protein>